<feature type="chain" id="PRO_1000007040" description="Large ribosomal subunit protein bL12">
    <location>
        <begin position="1"/>
        <end position="128"/>
    </location>
</feature>
<sequence>MALSKAEILDAIASLTVLELSELIKDLEEKFGVSAAAAAVAVAAPAAGGGDAGAAAAEKTEFDVILASAGDNKVNVIKAVRELTSLGLKEAKDLVDAAPKAIKEGVSKADAEAAAKKLEEAGAKAEIK</sequence>
<name>RL7_METFK</name>
<organism>
    <name type="scientific">Methylobacillus flagellatus (strain ATCC 51484 / DSM 6875 / VKM B-1610 / KT)</name>
    <dbReference type="NCBI Taxonomy" id="265072"/>
    <lineage>
        <taxon>Bacteria</taxon>
        <taxon>Pseudomonadati</taxon>
        <taxon>Pseudomonadota</taxon>
        <taxon>Betaproteobacteria</taxon>
        <taxon>Nitrosomonadales</taxon>
        <taxon>Methylophilaceae</taxon>
        <taxon>Methylobacillus</taxon>
    </lineage>
</organism>
<reference key="1">
    <citation type="submission" date="2006-03" db="EMBL/GenBank/DDBJ databases">
        <title>Complete sequence of Methylobacillus flagellatus KT.</title>
        <authorList>
            <consortium name="US DOE Joint Genome Institute"/>
            <person name="Copeland A."/>
            <person name="Lucas S."/>
            <person name="Lapidus A."/>
            <person name="Barry K."/>
            <person name="Detter J.C."/>
            <person name="Glavina del Rio T."/>
            <person name="Hammon N."/>
            <person name="Israni S."/>
            <person name="Dalin E."/>
            <person name="Tice H."/>
            <person name="Pitluck S."/>
            <person name="Brettin T."/>
            <person name="Bruce D."/>
            <person name="Han C."/>
            <person name="Tapia R."/>
            <person name="Saunders E."/>
            <person name="Gilna P."/>
            <person name="Schmutz J."/>
            <person name="Larimer F."/>
            <person name="Land M."/>
            <person name="Kyrpides N."/>
            <person name="Anderson I."/>
            <person name="Richardson P."/>
        </authorList>
    </citation>
    <scope>NUCLEOTIDE SEQUENCE [LARGE SCALE GENOMIC DNA]</scope>
    <source>
        <strain>ATCC 51484 / DSM 6875 / VKM B-1610 / KT</strain>
    </source>
</reference>
<accession>Q1H4P5</accession>
<gene>
    <name evidence="1" type="primary">rplL</name>
    <name type="ordered locus">Mfla_0271</name>
</gene>
<evidence type="ECO:0000255" key="1">
    <source>
        <dbReference type="HAMAP-Rule" id="MF_00368"/>
    </source>
</evidence>
<evidence type="ECO:0000305" key="2"/>
<comment type="function">
    <text evidence="1">Forms part of the ribosomal stalk which helps the ribosome interact with GTP-bound translation factors. Is thus essential for accurate translation.</text>
</comment>
<comment type="subunit">
    <text evidence="1">Homodimer. Part of the ribosomal stalk of the 50S ribosomal subunit. Forms a multimeric L10(L12)X complex, where L10 forms an elongated spine to which 2 to 4 L12 dimers bind in a sequential fashion. Binds GTP-bound translation factors.</text>
</comment>
<comment type="similarity">
    <text evidence="1">Belongs to the bacterial ribosomal protein bL12 family.</text>
</comment>
<keyword id="KW-1185">Reference proteome</keyword>
<keyword id="KW-0687">Ribonucleoprotein</keyword>
<keyword id="KW-0689">Ribosomal protein</keyword>
<dbReference type="EMBL" id="CP000284">
    <property type="protein sequence ID" value="ABE48542.1"/>
    <property type="molecule type" value="Genomic_DNA"/>
</dbReference>
<dbReference type="RefSeq" id="WP_011478639.1">
    <property type="nucleotide sequence ID" value="NC_007947.1"/>
</dbReference>
<dbReference type="SMR" id="Q1H4P5"/>
<dbReference type="STRING" id="265072.Mfla_0271"/>
<dbReference type="KEGG" id="mfa:Mfla_0271"/>
<dbReference type="eggNOG" id="COG0222">
    <property type="taxonomic scope" value="Bacteria"/>
</dbReference>
<dbReference type="HOGENOM" id="CLU_086499_3_2_4"/>
<dbReference type="OrthoDB" id="9811748at2"/>
<dbReference type="Proteomes" id="UP000002440">
    <property type="component" value="Chromosome"/>
</dbReference>
<dbReference type="GO" id="GO:0022625">
    <property type="term" value="C:cytosolic large ribosomal subunit"/>
    <property type="evidence" value="ECO:0007669"/>
    <property type="project" value="TreeGrafter"/>
</dbReference>
<dbReference type="GO" id="GO:0003729">
    <property type="term" value="F:mRNA binding"/>
    <property type="evidence" value="ECO:0007669"/>
    <property type="project" value="TreeGrafter"/>
</dbReference>
<dbReference type="GO" id="GO:0003735">
    <property type="term" value="F:structural constituent of ribosome"/>
    <property type="evidence" value="ECO:0007669"/>
    <property type="project" value="InterPro"/>
</dbReference>
<dbReference type="GO" id="GO:0006412">
    <property type="term" value="P:translation"/>
    <property type="evidence" value="ECO:0007669"/>
    <property type="project" value="UniProtKB-UniRule"/>
</dbReference>
<dbReference type="CDD" id="cd00387">
    <property type="entry name" value="Ribosomal_L7_L12"/>
    <property type="match status" value="1"/>
</dbReference>
<dbReference type="FunFam" id="3.30.1390.10:FF:000001">
    <property type="entry name" value="50S ribosomal protein L7/L12"/>
    <property type="match status" value="1"/>
</dbReference>
<dbReference type="Gene3D" id="3.30.1390.10">
    <property type="match status" value="1"/>
</dbReference>
<dbReference type="Gene3D" id="1.20.5.710">
    <property type="entry name" value="Single helix bin"/>
    <property type="match status" value="1"/>
</dbReference>
<dbReference type="HAMAP" id="MF_00368">
    <property type="entry name" value="Ribosomal_bL12"/>
    <property type="match status" value="1"/>
</dbReference>
<dbReference type="InterPro" id="IPR000206">
    <property type="entry name" value="Ribosomal_bL12"/>
</dbReference>
<dbReference type="InterPro" id="IPR013823">
    <property type="entry name" value="Ribosomal_bL12_C"/>
</dbReference>
<dbReference type="InterPro" id="IPR014719">
    <property type="entry name" value="Ribosomal_bL12_C/ClpS-like"/>
</dbReference>
<dbReference type="InterPro" id="IPR008932">
    <property type="entry name" value="Ribosomal_bL12_oligo"/>
</dbReference>
<dbReference type="InterPro" id="IPR036235">
    <property type="entry name" value="Ribosomal_bL12_oligo_N_sf"/>
</dbReference>
<dbReference type="NCBIfam" id="TIGR00855">
    <property type="entry name" value="L12"/>
    <property type="match status" value="1"/>
</dbReference>
<dbReference type="PANTHER" id="PTHR45987">
    <property type="entry name" value="39S RIBOSOMAL PROTEIN L12"/>
    <property type="match status" value="1"/>
</dbReference>
<dbReference type="PANTHER" id="PTHR45987:SF4">
    <property type="entry name" value="LARGE RIBOSOMAL SUBUNIT PROTEIN BL12M"/>
    <property type="match status" value="1"/>
</dbReference>
<dbReference type="Pfam" id="PF00542">
    <property type="entry name" value="Ribosomal_L12"/>
    <property type="match status" value="1"/>
</dbReference>
<dbReference type="Pfam" id="PF16320">
    <property type="entry name" value="Ribosomal_L12_N"/>
    <property type="match status" value="1"/>
</dbReference>
<dbReference type="SUPFAM" id="SSF54736">
    <property type="entry name" value="ClpS-like"/>
    <property type="match status" value="1"/>
</dbReference>
<dbReference type="SUPFAM" id="SSF48300">
    <property type="entry name" value="Ribosomal protein L7/12, oligomerisation (N-terminal) domain"/>
    <property type="match status" value="1"/>
</dbReference>
<protein>
    <recommendedName>
        <fullName evidence="1">Large ribosomal subunit protein bL12</fullName>
    </recommendedName>
    <alternativeName>
        <fullName evidence="2">50S ribosomal protein L7/L12</fullName>
    </alternativeName>
</protein>
<proteinExistence type="inferred from homology"/>